<dbReference type="EMBL" id="AY649868">
    <property type="protein sequence ID" value="AAT98001.1"/>
    <property type="molecule type" value="mRNA"/>
</dbReference>
<dbReference type="SMR" id="Q68PG5"/>
<dbReference type="GO" id="GO:0005576">
    <property type="term" value="C:extracellular region"/>
    <property type="evidence" value="ECO:0007669"/>
    <property type="project" value="UniProtKB-SubCell"/>
</dbReference>
<dbReference type="GO" id="GO:0019871">
    <property type="term" value="F:sodium channel inhibitor activity"/>
    <property type="evidence" value="ECO:0007669"/>
    <property type="project" value="InterPro"/>
</dbReference>
<dbReference type="GO" id="GO:0090729">
    <property type="term" value="F:toxin activity"/>
    <property type="evidence" value="ECO:0007669"/>
    <property type="project" value="UniProtKB-KW"/>
</dbReference>
<dbReference type="GO" id="GO:0006952">
    <property type="term" value="P:defense response"/>
    <property type="evidence" value="ECO:0007669"/>
    <property type="project" value="InterPro"/>
</dbReference>
<dbReference type="CDD" id="cd23106">
    <property type="entry name" value="neurotoxins_LC_scorpion"/>
    <property type="match status" value="1"/>
</dbReference>
<dbReference type="FunFam" id="3.30.30.10:FF:000002">
    <property type="entry name" value="Alpha-like toxin BmK-M1"/>
    <property type="match status" value="1"/>
</dbReference>
<dbReference type="Gene3D" id="3.30.30.10">
    <property type="entry name" value="Knottin, scorpion toxin-like"/>
    <property type="match status" value="1"/>
</dbReference>
<dbReference type="InterPro" id="IPR044062">
    <property type="entry name" value="LCN-type_CS_alpha_beta_dom"/>
</dbReference>
<dbReference type="InterPro" id="IPR003614">
    <property type="entry name" value="Scorpion_toxin-like"/>
</dbReference>
<dbReference type="InterPro" id="IPR036574">
    <property type="entry name" value="Scorpion_toxin-like_sf"/>
</dbReference>
<dbReference type="InterPro" id="IPR018218">
    <property type="entry name" value="Scorpion_toxinL"/>
</dbReference>
<dbReference type="InterPro" id="IPR002061">
    <property type="entry name" value="Scorpion_toxinL/defensin"/>
</dbReference>
<dbReference type="Pfam" id="PF00537">
    <property type="entry name" value="Toxin_3"/>
    <property type="match status" value="1"/>
</dbReference>
<dbReference type="PRINTS" id="PR00285">
    <property type="entry name" value="SCORPNTOXIN"/>
</dbReference>
<dbReference type="SMART" id="SM00505">
    <property type="entry name" value="Knot1"/>
    <property type="match status" value="1"/>
</dbReference>
<dbReference type="SUPFAM" id="SSF57095">
    <property type="entry name" value="Scorpion toxin-like"/>
    <property type="match status" value="1"/>
</dbReference>
<dbReference type="PROSITE" id="PS51863">
    <property type="entry name" value="LCN_CSAB"/>
    <property type="match status" value="1"/>
</dbReference>
<proteinExistence type="evidence at transcript level"/>
<keyword id="KW-0027">Amidation</keyword>
<keyword id="KW-1015">Disulfide bond</keyword>
<keyword id="KW-0872">Ion channel impairing toxin</keyword>
<keyword id="KW-0528">Neurotoxin</keyword>
<keyword id="KW-0964">Secreted</keyword>
<keyword id="KW-0800">Toxin</keyword>
<keyword id="KW-0738">Voltage-gated sodium channel impairing toxin</keyword>
<comment type="function">
    <text evidence="1">Beta toxins bind voltage-independently at site-4 of sodium channels (Nav) and shift the voltage of activation toward more negative potentials thereby affecting sodium channel activation and promoting spontaneous and repetitive firing.</text>
</comment>
<comment type="subcellular location">
    <subcellularLocation>
        <location evidence="1">Secreted</location>
    </subcellularLocation>
</comment>
<comment type="tissue specificity">
    <text>Expressed by the venom gland.</text>
</comment>
<comment type="domain">
    <text evidence="4">Has the structural arrangement of an alpha-helix connected to antiparallel beta-sheets by disulfide bonds (CS-alpha/beta).</text>
</comment>
<comment type="similarity">
    <text evidence="4">Belongs to the long (4 C-C) scorpion toxin superfamily. Sodium channel inhibitor family. Beta subfamily.</text>
</comment>
<organism>
    <name type="scientific">Centruroides exilicauda</name>
    <name type="common">Bark scorpion</name>
    <name type="synonym">Buthus exilicauda</name>
    <dbReference type="NCBI Taxonomy" id="6879"/>
    <lineage>
        <taxon>Eukaryota</taxon>
        <taxon>Metazoa</taxon>
        <taxon>Ecdysozoa</taxon>
        <taxon>Arthropoda</taxon>
        <taxon>Chelicerata</taxon>
        <taxon>Arachnida</taxon>
        <taxon>Scorpiones</taxon>
        <taxon>Buthida</taxon>
        <taxon>Buthoidea</taxon>
        <taxon>Buthidae</taxon>
        <taxon>Centruroides</taxon>
    </lineage>
</organism>
<reference key="1">
    <citation type="journal article" date="2004" name="Biochimie">
        <title>Biochemical, genetic and physiological characterization of venom components from two species of scorpions: Centruroides exilicauda Wood and Centruroides sculpturatus Ewing.</title>
        <authorList>
            <person name="Valdez-Cruz N.A."/>
            <person name="Davila S."/>
            <person name="Licea A."/>
            <person name="Corona M."/>
            <person name="Zamudio F.Z."/>
            <person name="Garcia-Valdes J."/>
            <person name="Boyer L."/>
            <person name="Possani L.D."/>
        </authorList>
    </citation>
    <scope>NUCLEOTIDE SEQUENCE [MRNA]</scope>
    <source>
        <tissue>Venom gland</tissue>
    </source>
</reference>
<protein>
    <recommendedName>
        <fullName>Neurotoxin Cex10</fullName>
    </recommendedName>
</protein>
<sequence>KDGYLVEVTGCKKSCYKLGENKFCNRECKMKHRGGSYGYCYFFGCYCEGLAESTPTWPLPNKSCGKK</sequence>
<feature type="chain" id="PRO_0000254080" description="Neurotoxin Cex10">
    <location>
        <begin position="1"/>
        <end position="64"/>
    </location>
</feature>
<feature type="propeptide" id="PRO_0000254081">
    <location>
        <begin position="65"/>
        <end position="67"/>
    </location>
</feature>
<feature type="domain" description="LCN-type CS-alpha/beta" evidence="3">
    <location>
        <begin position="1"/>
        <end position="65"/>
    </location>
</feature>
<feature type="modified residue" description="Cysteine amide" evidence="2">
    <location>
        <position position="64"/>
    </location>
</feature>
<feature type="disulfide bond" evidence="3">
    <location>
        <begin position="11"/>
        <end position="64"/>
    </location>
</feature>
<feature type="disulfide bond" evidence="3">
    <location>
        <begin position="15"/>
        <end position="40"/>
    </location>
</feature>
<feature type="disulfide bond" evidence="3">
    <location>
        <begin position="24"/>
        <end position="45"/>
    </location>
</feature>
<feature type="disulfide bond" evidence="3">
    <location>
        <begin position="28"/>
        <end position="47"/>
    </location>
</feature>
<accession>Q68PG5</accession>
<evidence type="ECO:0000250" key="1"/>
<evidence type="ECO:0000255" key="2"/>
<evidence type="ECO:0000255" key="3">
    <source>
        <dbReference type="PROSITE-ProRule" id="PRU01210"/>
    </source>
</evidence>
<evidence type="ECO:0000305" key="4"/>
<name>SCX10_CENEX</name>